<accession>Q60259</accession>
<name>Y3522_METJA</name>
<organism>
    <name type="scientific">Methanocaldococcus jannaschii (strain ATCC 43067 / DSM 2661 / JAL-1 / JCM 10045 / NBRC 100440)</name>
    <name type="common">Methanococcus jannaschii</name>
    <dbReference type="NCBI Taxonomy" id="243232"/>
    <lineage>
        <taxon>Archaea</taxon>
        <taxon>Methanobacteriati</taxon>
        <taxon>Methanobacteriota</taxon>
        <taxon>Methanomada group</taxon>
        <taxon>Methanococci</taxon>
        <taxon>Methanococcales</taxon>
        <taxon>Methanocaldococcaceae</taxon>
        <taxon>Methanocaldococcus</taxon>
    </lineage>
</organism>
<sequence>MLELRSLSIRGGIAVLECGRRCISAINLKTGDKIWEFKTEWDIESISIKDNRVMLKCNGRRHIYIDLKTGRKIRELIIL</sequence>
<reference key="1">
    <citation type="journal article" date="1996" name="Science">
        <title>Complete genome sequence of the methanogenic archaeon, Methanococcus jannaschii.</title>
        <authorList>
            <person name="Bult C.J."/>
            <person name="White O."/>
            <person name="Olsen G.J."/>
            <person name="Zhou L."/>
            <person name="Fleischmann R.D."/>
            <person name="Sutton G.G."/>
            <person name="Blake J.A."/>
            <person name="FitzGerald L.M."/>
            <person name="Clayton R.A."/>
            <person name="Gocayne J.D."/>
            <person name="Kerlavage A.R."/>
            <person name="Dougherty B.A."/>
            <person name="Tomb J.-F."/>
            <person name="Adams M.D."/>
            <person name="Reich C.I."/>
            <person name="Overbeek R."/>
            <person name="Kirkness E.F."/>
            <person name="Weinstock K.G."/>
            <person name="Merrick J.M."/>
            <person name="Glodek A."/>
            <person name="Scott J.L."/>
            <person name="Geoghagen N.S.M."/>
            <person name="Weidman J.F."/>
            <person name="Fuhrmann J.L."/>
            <person name="Nguyen D."/>
            <person name="Utterback T.R."/>
            <person name="Kelley J.M."/>
            <person name="Peterson J.D."/>
            <person name="Sadow P.W."/>
            <person name="Hanna M.C."/>
            <person name="Cotton M.D."/>
            <person name="Roberts K.M."/>
            <person name="Hurst M.A."/>
            <person name="Kaine B.P."/>
            <person name="Borodovsky M."/>
            <person name="Klenk H.-P."/>
            <person name="Fraser C.M."/>
            <person name="Smith H.O."/>
            <person name="Woese C.R."/>
            <person name="Venter J.C."/>
        </authorList>
    </citation>
    <scope>NUCLEOTIDE SEQUENCE [LARGE SCALE GENOMIC DNA]</scope>
    <source>
        <strain>ATCC 43067 / DSM 2661 / JAL-1 / JCM 10045 / NBRC 100440</strain>
    </source>
</reference>
<dbReference type="EMBL" id="L77118">
    <property type="protein sequence ID" value="AAC37093.1"/>
    <property type="molecule type" value="Genomic_DNA"/>
</dbReference>
<dbReference type="PIR" id="E64512">
    <property type="entry name" value="E64512"/>
</dbReference>
<dbReference type="RefSeq" id="WP_010890069.1">
    <property type="nucleotide sequence ID" value="NC_001732.1"/>
</dbReference>
<dbReference type="SMR" id="Q60259"/>
<dbReference type="PaxDb" id="243232-MJ_ECL22"/>
<dbReference type="EnsemblBacteria" id="AAC37093">
    <property type="protein sequence ID" value="AAC37093"/>
    <property type="gene ID" value="MJ_ECL22"/>
</dbReference>
<dbReference type="GeneID" id="1450806"/>
<dbReference type="KEGG" id="mja:MJ_ECL22"/>
<dbReference type="HOGENOM" id="CLU_2597744_0_0_2"/>
<dbReference type="InParanoid" id="Q60259"/>
<dbReference type="Proteomes" id="UP000000805">
    <property type="component" value="Plasmid pDSM2661_1"/>
</dbReference>
<dbReference type="Gene3D" id="2.130.10.10">
    <property type="entry name" value="YVTN repeat-like/Quinoprotein amine dehydrogenase"/>
    <property type="match status" value="1"/>
</dbReference>
<dbReference type="InterPro" id="IPR011047">
    <property type="entry name" value="Quinoprotein_ADH-like_sf"/>
</dbReference>
<dbReference type="InterPro" id="IPR015943">
    <property type="entry name" value="WD40/YVTN_repeat-like_dom_sf"/>
</dbReference>
<dbReference type="SUPFAM" id="SSF50998">
    <property type="entry name" value="Quinoprotein alcohol dehydrogenase-like"/>
    <property type="match status" value="1"/>
</dbReference>
<feature type="chain" id="PRO_0000107510" description="Uncharacterized protein MJECL22">
    <location>
        <begin position="1"/>
        <end position="79"/>
    </location>
</feature>
<proteinExistence type="predicted"/>
<keyword id="KW-0614">Plasmid</keyword>
<keyword id="KW-1185">Reference proteome</keyword>
<gene>
    <name type="ordered locus">MJECL22</name>
</gene>
<protein>
    <recommendedName>
        <fullName>Uncharacterized protein MJECL22</fullName>
    </recommendedName>
</protein>
<geneLocation type="plasmid">
    <name>large ECE</name>
</geneLocation>